<sequence>MIPLKMLLLVTLLLGASLQVTHAARGTNVGRECCLEYFKGAIPISRLTRWYKTSGECPKDAIVFVTVQGKSICSDPKDKRVKKAVRYLQRTWKGGPQES</sequence>
<organism>
    <name type="scientific">Canis lupus familiaris</name>
    <name type="common">Dog</name>
    <name type="synonym">Canis familiaris</name>
    <dbReference type="NCBI Taxonomy" id="9615"/>
    <lineage>
        <taxon>Eukaryota</taxon>
        <taxon>Metazoa</taxon>
        <taxon>Chordata</taxon>
        <taxon>Craniata</taxon>
        <taxon>Vertebrata</taxon>
        <taxon>Euteleostomi</taxon>
        <taxon>Mammalia</taxon>
        <taxon>Eutheria</taxon>
        <taxon>Laurasiatheria</taxon>
        <taxon>Carnivora</taxon>
        <taxon>Caniformia</taxon>
        <taxon>Canidae</taxon>
        <taxon>Canis</taxon>
    </lineage>
</organism>
<accession>Q95N01</accession>
<comment type="function">
    <text evidence="1 2">Chemokine, which displays chemotactic activity for T lymphocytes, preferentially Th2 cells, but not monocytes or granulocytes. Therefore plays an important role in a wide range of inflammatory and immunological processes. Acts by binding to CCR4 at T-cell surface. Mediates GM-CSF/CSF2-driven pain and inflammation (By similarity). In the brain, required to maintain the typical, highly branched morphology of hippocampal microglia under homeostatic conditions. May be important for the appropriate adaptation of microglial morphology and synaptic plasticity to acute lipopolysaccharide (LPS)-induced neuroinflammation. Plays a role in wound healing, mainly by inducing fibroblast migration into the wound (By similarity).</text>
</comment>
<comment type="subcellular location">
    <subcellularLocation>
        <location evidence="1">Secreted</location>
    </subcellularLocation>
</comment>
<comment type="tissue specificity">
    <text evidence="3">Expressed in thymus, spleen, lymph node, lung and heart.</text>
</comment>
<comment type="similarity">
    <text evidence="4">Belongs to the intercrine beta (chemokine CC) family.</text>
</comment>
<evidence type="ECO:0000250" key="1">
    <source>
        <dbReference type="UniProtKB" id="Q92583"/>
    </source>
</evidence>
<evidence type="ECO:0000250" key="2">
    <source>
        <dbReference type="UniProtKB" id="Q9WUZ6"/>
    </source>
</evidence>
<evidence type="ECO:0000269" key="3">
    <source>
    </source>
</evidence>
<evidence type="ECO:0000305" key="4"/>
<proteinExistence type="evidence at transcript level"/>
<protein>
    <recommendedName>
        <fullName>C-C motif chemokine 17</fullName>
    </recommendedName>
    <alternativeName>
        <fullName>CC chemokine TARC</fullName>
    </alternativeName>
    <alternativeName>
        <fullName>Small-inducible cytokine A17</fullName>
    </alternativeName>
    <alternativeName>
        <fullName>Thymus and activation-regulated chemokine</fullName>
    </alternativeName>
</protein>
<name>CCL17_CANLF</name>
<dbReference type="EMBL" id="AB054642">
    <property type="protein sequence ID" value="BAB62131.1"/>
    <property type="molecule type" value="mRNA"/>
</dbReference>
<dbReference type="RefSeq" id="NP_001003051.1">
    <property type="nucleotide sequence ID" value="NM_001003051.1"/>
</dbReference>
<dbReference type="RefSeq" id="XP_005617272.1">
    <property type="nucleotide sequence ID" value="XM_005617215.2"/>
</dbReference>
<dbReference type="RefSeq" id="XP_038513642.1">
    <property type="nucleotide sequence ID" value="XM_038657714.1"/>
</dbReference>
<dbReference type="SMR" id="Q95N01"/>
<dbReference type="FunCoup" id="Q95N01">
    <property type="interactions" value="232"/>
</dbReference>
<dbReference type="STRING" id="9615.ENSCAFP00000048446"/>
<dbReference type="PaxDb" id="9612-ENSCAFP00000012872"/>
<dbReference type="Ensembl" id="ENSCAFT00000013912.5">
    <property type="protein sequence ID" value="ENSCAFP00000012872.3"/>
    <property type="gene ID" value="ENSCAFG00000008754.5"/>
</dbReference>
<dbReference type="Ensembl" id="ENSCAFT00030005436.1">
    <property type="protein sequence ID" value="ENSCAFP00030004835.1"/>
    <property type="gene ID" value="ENSCAFG00030002926.1"/>
</dbReference>
<dbReference type="Ensembl" id="ENSCAFT00040021004.1">
    <property type="protein sequence ID" value="ENSCAFP00040018236.1"/>
    <property type="gene ID" value="ENSCAFG00040011362.1"/>
</dbReference>
<dbReference type="Ensembl" id="ENSCAFT00845005928.1">
    <property type="protein sequence ID" value="ENSCAFP00845004715.1"/>
    <property type="gene ID" value="ENSCAFG00845003329.1"/>
</dbReference>
<dbReference type="GeneID" id="403586"/>
<dbReference type="KEGG" id="cfa:403586"/>
<dbReference type="CTD" id="6361"/>
<dbReference type="VEuPathDB" id="HostDB:ENSCAFG00845003329"/>
<dbReference type="VGNC" id="VGNC:38882">
    <property type="gene designation" value="CCL17"/>
</dbReference>
<dbReference type="eggNOG" id="ENOG502SWZ0">
    <property type="taxonomic scope" value="Eukaryota"/>
</dbReference>
<dbReference type="GeneTree" id="ENSGT00940000166352"/>
<dbReference type="HOGENOM" id="CLU_141716_6_0_1"/>
<dbReference type="InParanoid" id="Q95N01"/>
<dbReference type="OMA" id="CCLDYFK"/>
<dbReference type="OrthoDB" id="9447832at2759"/>
<dbReference type="TreeFam" id="TF334888"/>
<dbReference type="Proteomes" id="UP000002254">
    <property type="component" value="Chromosome 2"/>
</dbReference>
<dbReference type="Proteomes" id="UP000694429">
    <property type="component" value="Chromosome 2"/>
</dbReference>
<dbReference type="Proteomes" id="UP000694542">
    <property type="component" value="Chromosome 2"/>
</dbReference>
<dbReference type="Proteomes" id="UP000805418">
    <property type="component" value="Chromosome 2"/>
</dbReference>
<dbReference type="Bgee" id="ENSCAFG00000008754">
    <property type="expression patterns" value="Expressed in lymph node and 25 other cell types or tissues"/>
</dbReference>
<dbReference type="GO" id="GO:0005615">
    <property type="term" value="C:extracellular space"/>
    <property type="evidence" value="ECO:0007669"/>
    <property type="project" value="UniProtKB-KW"/>
</dbReference>
<dbReference type="GO" id="GO:0008009">
    <property type="term" value="F:chemokine activity"/>
    <property type="evidence" value="ECO:0007669"/>
    <property type="project" value="InterPro"/>
</dbReference>
<dbReference type="GO" id="GO:0006955">
    <property type="term" value="P:immune response"/>
    <property type="evidence" value="ECO:0007669"/>
    <property type="project" value="InterPro"/>
</dbReference>
<dbReference type="GO" id="GO:0006954">
    <property type="term" value="P:inflammatory response"/>
    <property type="evidence" value="ECO:0007669"/>
    <property type="project" value="UniProtKB-KW"/>
</dbReference>
<dbReference type="CDD" id="cd00272">
    <property type="entry name" value="Chemokine_CC"/>
    <property type="match status" value="1"/>
</dbReference>
<dbReference type="FunFam" id="2.40.50.40:FF:000012">
    <property type="entry name" value="C-C motif chemokine"/>
    <property type="match status" value="1"/>
</dbReference>
<dbReference type="Gene3D" id="2.40.50.40">
    <property type="match status" value="1"/>
</dbReference>
<dbReference type="InterPro" id="IPR039809">
    <property type="entry name" value="Chemokine_b/g/d"/>
</dbReference>
<dbReference type="InterPro" id="IPR000827">
    <property type="entry name" value="Chemokine_CC_CS"/>
</dbReference>
<dbReference type="InterPro" id="IPR001811">
    <property type="entry name" value="Chemokine_IL8-like_dom"/>
</dbReference>
<dbReference type="InterPro" id="IPR036048">
    <property type="entry name" value="Interleukin_8-like_sf"/>
</dbReference>
<dbReference type="PANTHER" id="PTHR12015:SF111">
    <property type="entry name" value="C-C MOTIF CHEMOKINE 17"/>
    <property type="match status" value="1"/>
</dbReference>
<dbReference type="PANTHER" id="PTHR12015">
    <property type="entry name" value="SMALL INDUCIBLE CYTOKINE A"/>
    <property type="match status" value="1"/>
</dbReference>
<dbReference type="Pfam" id="PF00048">
    <property type="entry name" value="IL8"/>
    <property type="match status" value="1"/>
</dbReference>
<dbReference type="SMART" id="SM00199">
    <property type="entry name" value="SCY"/>
    <property type="match status" value="1"/>
</dbReference>
<dbReference type="SUPFAM" id="SSF54117">
    <property type="entry name" value="Interleukin 8-like chemokines"/>
    <property type="match status" value="1"/>
</dbReference>
<dbReference type="PROSITE" id="PS00472">
    <property type="entry name" value="SMALL_CYTOKINES_CC"/>
    <property type="match status" value="1"/>
</dbReference>
<feature type="signal peptide" evidence="1">
    <location>
        <begin position="1"/>
        <end position="23"/>
    </location>
</feature>
<feature type="chain" id="PRO_0000005210" description="C-C motif chemokine 17">
    <location>
        <begin position="24"/>
        <end position="99"/>
    </location>
</feature>
<feature type="disulfide bond" evidence="1">
    <location>
        <begin position="33"/>
        <end position="57"/>
    </location>
</feature>
<feature type="disulfide bond" evidence="1">
    <location>
        <begin position="34"/>
        <end position="73"/>
    </location>
</feature>
<gene>
    <name type="primary">CCL17</name>
    <name type="synonym">TARC</name>
</gene>
<reference key="1">
    <citation type="journal article" date="2001" name="J. Vet. Med. Sci.">
        <title>Molecular cloning of canine thymus and activation-regulated chemokine (TARC) gene and its expression in various tissues.</title>
        <authorList>
            <person name="Maeda S."/>
            <person name="Mizuno T."/>
            <person name="Yamashita K."/>
            <person name="Kurata K."/>
            <person name="Masuda K."/>
            <person name="Ohno K."/>
            <person name="Tsujimoto H."/>
        </authorList>
    </citation>
    <scope>NUCLEOTIDE SEQUENCE [MRNA]</scope>
    <scope>TISSUE SPECIFICITY</scope>
    <source>
        <tissue>Thymus</tissue>
    </source>
</reference>
<keyword id="KW-0145">Chemotaxis</keyword>
<keyword id="KW-0202">Cytokine</keyword>
<keyword id="KW-1015">Disulfide bond</keyword>
<keyword id="KW-0395">Inflammatory response</keyword>
<keyword id="KW-1185">Reference proteome</keyword>
<keyword id="KW-0964">Secreted</keyword>
<keyword id="KW-0732">Signal</keyword>